<comment type="function">
    <text evidence="1">Capsid protein. Probably binds RNA and plays a role in packaging (By similarity).</text>
</comment>
<comment type="subcellular location">
    <subcellularLocation>
        <location evidence="3">Virion</location>
    </subcellularLocation>
</comment>
<comment type="domain">
    <text evidence="1">The N-terminal arginine-rich stretch does not seem to be the major RNA-binding region that allows formation of an infectious ribonucleoprotein complex.</text>
</comment>
<comment type="similarity">
    <text evidence="3">Belongs to the cucumovirus capsid protein family.</text>
</comment>
<organism>
    <name type="scientific">Cucumber mosaic virus (strain M48)</name>
    <name type="common">CMV</name>
    <dbReference type="NCBI Taxonomy" id="117121"/>
    <lineage>
        <taxon>Viruses</taxon>
        <taxon>Riboviria</taxon>
        <taxon>Orthornavirae</taxon>
        <taxon>Kitrinoviricota</taxon>
        <taxon>Alsuviricetes</taxon>
        <taxon>Martellivirales</taxon>
        <taxon>Bromoviridae</taxon>
        <taxon>Cucumovirus</taxon>
        <taxon>Cucumber mosaic virus</taxon>
    </lineage>
</organism>
<sequence length="218" mass="24189">MDKSDSASAGRNRRRRPRRGSRSASSSADVNFRVLSQQLSRLNKTLAAGRPTINHPTFVGSERCKPGYTFTSITLRPPKIDRGSYYGKRLFLPESVTEFDKKLVSRIQIRVNPLPKFDSTVWVTVRKVPASSDLSVAAISTMFADGASPVLVYQYAASGVQANNKLLYDLSPMRADIGDMRKYAVLVYSKDDALESDELVLHVDIEHQRIPTSGVLPV</sequence>
<protein>
    <recommendedName>
        <fullName>Capsid protein</fullName>
        <shortName>CP</shortName>
    </recommendedName>
    <alternativeName>
        <fullName>Coat protein</fullName>
    </alternativeName>
</protein>
<proteinExistence type="inferred from homology"/>
<dbReference type="EMBL" id="D49496">
    <property type="protein sequence ID" value="BAA08456.1"/>
    <property type="molecule type" value="Genomic_RNA"/>
</dbReference>
<dbReference type="SMR" id="Q83251"/>
<dbReference type="GO" id="GO:1990904">
    <property type="term" value="C:ribonucleoprotein complex"/>
    <property type="evidence" value="ECO:0007669"/>
    <property type="project" value="UniProtKB-KW"/>
</dbReference>
<dbReference type="GO" id="GO:0039617">
    <property type="term" value="C:T=3 icosahedral viral capsid"/>
    <property type="evidence" value="ECO:0007669"/>
    <property type="project" value="UniProtKB-KW"/>
</dbReference>
<dbReference type="GO" id="GO:0019013">
    <property type="term" value="C:viral nucleocapsid"/>
    <property type="evidence" value="ECO:0007669"/>
    <property type="project" value="UniProtKB-KW"/>
</dbReference>
<dbReference type="GO" id="GO:0003723">
    <property type="term" value="F:RNA binding"/>
    <property type="evidence" value="ECO:0007669"/>
    <property type="project" value="UniProtKB-KW"/>
</dbReference>
<dbReference type="GO" id="GO:0005198">
    <property type="term" value="F:structural molecule activity"/>
    <property type="evidence" value="ECO:0007669"/>
    <property type="project" value="InterPro"/>
</dbReference>
<dbReference type="Gene3D" id="2.60.120.530">
    <property type="entry name" value="Cucumovirus coat protein, subunit A"/>
    <property type="match status" value="1"/>
</dbReference>
<dbReference type="InterPro" id="IPR000247">
    <property type="entry name" value="Cucumovirus_coat"/>
</dbReference>
<dbReference type="InterPro" id="IPR037137">
    <property type="entry name" value="Cucumovirus_coat_Asu_sf"/>
</dbReference>
<dbReference type="Pfam" id="PF00760">
    <property type="entry name" value="Cucumo_coat"/>
    <property type="match status" value="1"/>
</dbReference>
<dbReference type="PRINTS" id="PR00222">
    <property type="entry name" value="CUCUMOCOAT"/>
</dbReference>
<dbReference type="SUPFAM" id="SSF88633">
    <property type="entry name" value="Positive stranded ssRNA viruses"/>
    <property type="match status" value="1"/>
</dbReference>
<name>CAPSD_CMVM4</name>
<organismHost>
    <name type="scientific">Cucumis sativus</name>
    <name type="common">Cucumber</name>
    <dbReference type="NCBI Taxonomy" id="3659"/>
</organismHost>
<organismHost>
    <name type="scientific">Solanum lycopersicum</name>
    <name type="common">Tomato</name>
    <name type="synonym">Lycopersicon esculentum</name>
    <dbReference type="NCBI Taxonomy" id="4081"/>
</organismHost>
<organismHost>
    <name type="scientific">Spinacia oleracea</name>
    <name type="common">Spinach</name>
    <dbReference type="NCBI Taxonomy" id="3562"/>
</organismHost>
<accession>Q83251</accession>
<feature type="chain" id="PRO_0000083212" description="Capsid protein">
    <location>
        <begin position="1"/>
        <end position="218"/>
    </location>
</feature>
<feature type="region of interest" description="Disordered" evidence="2">
    <location>
        <begin position="1"/>
        <end position="28"/>
    </location>
</feature>
<feature type="compositionally biased region" description="Low complexity" evidence="2">
    <location>
        <begin position="1"/>
        <end position="10"/>
    </location>
</feature>
<feature type="compositionally biased region" description="Basic residues" evidence="2">
    <location>
        <begin position="11"/>
        <end position="21"/>
    </location>
</feature>
<feature type="modified residue" description="N-acetylmethionine; by host" evidence="1">
    <location>
        <position position="1"/>
    </location>
</feature>
<keyword id="KW-0007">Acetylation</keyword>
<keyword id="KW-0167">Capsid protein</keyword>
<keyword id="KW-0687">Ribonucleoprotein</keyword>
<keyword id="KW-0694">RNA-binding</keyword>
<keyword id="KW-1142">T=3 icosahedral capsid protein</keyword>
<keyword id="KW-0543">Viral nucleoprotein</keyword>
<keyword id="KW-0946">Virion</keyword>
<evidence type="ECO:0000250" key="1"/>
<evidence type="ECO:0000256" key="2">
    <source>
        <dbReference type="SAM" id="MobiDB-lite"/>
    </source>
</evidence>
<evidence type="ECO:0000305" key="3"/>
<reference key="1">
    <citation type="submission" date="1995-03" db="EMBL/GenBank/DDBJ databases">
        <authorList>
            <person name="Wu C."/>
            <person name="Lee M."/>
            <person name="Hsu Y."/>
        </authorList>
    </citation>
    <scope>NUCLEOTIDE SEQUENCE [GENOMIC RNA]</scope>
</reference>
<gene>
    <name type="ORF">ORF3b</name>
</gene>